<keyword id="KW-1185">Reference proteome</keyword>
<keyword id="KW-1277">Toxin-antitoxin system</keyword>
<gene>
    <name type="primary">vapB48</name>
    <name type="ordered locus">Rv3697A</name>
</gene>
<name>VPB48_MYCTU</name>
<reference key="1">
    <citation type="journal article" date="1998" name="Nature">
        <title>Deciphering the biology of Mycobacterium tuberculosis from the complete genome sequence.</title>
        <authorList>
            <person name="Cole S.T."/>
            <person name="Brosch R."/>
            <person name="Parkhill J."/>
            <person name="Garnier T."/>
            <person name="Churcher C.M."/>
            <person name="Harris D.E."/>
            <person name="Gordon S.V."/>
            <person name="Eiglmeier K."/>
            <person name="Gas S."/>
            <person name="Barry C.E. III"/>
            <person name="Tekaia F."/>
            <person name="Badcock K."/>
            <person name="Basham D."/>
            <person name="Brown D."/>
            <person name="Chillingworth T."/>
            <person name="Connor R."/>
            <person name="Davies R.M."/>
            <person name="Devlin K."/>
            <person name="Feltwell T."/>
            <person name="Gentles S."/>
            <person name="Hamlin N."/>
            <person name="Holroyd S."/>
            <person name="Hornsby T."/>
            <person name="Jagels K."/>
            <person name="Krogh A."/>
            <person name="McLean J."/>
            <person name="Moule S."/>
            <person name="Murphy L.D."/>
            <person name="Oliver S."/>
            <person name="Osborne J."/>
            <person name="Quail M.A."/>
            <person name="Rajandream M.A."/>
            <person name="Rogers J."/>
            <person name="Rutter S."/>
            <person name="Seeger K."/>
            <person name="Skelton S."/>
            <person name="Squares S."/>
            <person name="Squares R."/>
            <person name="Sulston J.E."/>
            <person name="Taylor K."/>
            <person name="Whitehead S."/>
            <person name="Barrell B.G."/>
        </authorList>
    </citation>
    <scope>NUCLEOTIDE SEQUENCE [LARGE SCALE GENOMIC DNA]</scope>
    <source>
        <strain>ATCC 25618 / H37Rv</strain>
    </source>
</reference>
<reference key="2">
    <citation type="journal article" date="2009" name="PLoS Genet.">
        <title>Comprehensive functional analysis of Mycobacterium tuberculosis toxin-antitoxin systems: implications for pathogenesis, stress responses, and evolution.</title>
        <authorList>
            <person name="Ramage H.R."/>
            <person name="Connolly L.E."/>
            <person name="Cox J.S."/>
        </authorList>
    </citation>
    <scope>IDENTIFICATION</scope>
    <scope>POSSIBLE FUNCTION</scope>
    <source>
        <strain>ATCC 35801 / TMC 107 / Erdman</strain>
    </source>
</reference>
<dbReference type="EMBL" id="AL123456">
    <property type="protein sequence ID" value="CCP46522.1"/>
    <property type="molecule type" value="Genomic_DNA"/>
</dbReference>
<dbReference type="RefSeq" id="WP_003419787.1">
    <property type="nucleotide sequence ID" value="NZ_NVQJ01000028.1"/>
</dbReference>
<dbReference type="RefSeq" id="YP_007412423.1">
    <property type="nucleotide sequence ID" value="NC_000962.3"/>
</dbReference>
<dbReference type="SMR" id="P9WJ15"/>
<dbReference type="STRING" id="83332.Rv3697A"/>
<dbReference type="PaxDb" id="83332-Rv3697A"/>
<dbReference type="GeneID" id="14515904"/>
<dbReference type="KEGG" id="mtu:Rv3697A"/>
<dbReference type="KEGG" id="mtv:RVBD_3697A"/>
<dbReference type="TubercuList" id="Rv3697A"/>
<dbReference type="eggNOG" id="ENOG5030PB5">
    <property type="taxonomic scope" value="Bacteria"/>
</dbReference>
<dbReference type="InParanoid" id="P9WJ15"/>
<dbReference type="OrthoDB" id="4560449at2"/>
<dbReference type="Proteomes" id="UP000001584">
    <property type="component" value="Chromosome"/>
</dbReference>
<protein>
    <recommendedName>
        <fullName>Putative antitoxin VapB48</fullName>
    </recommendedName>
</protein>
<accession>P9WJ15</accession>
<accession>F2GFK6</accession>
<accession>P0CW36</accession>
<accession>Q8VIV3</accession>
<proteinExistence type="predicted"/>
<organism>
    <name type="scientific">Mycobacterium tuberculosis (strain ATCC 25618 / H37Rv)</name>
    <dbReference type="NCBI Taxonomy" id="83332"/>
    <lineage>
        <taxon>Bacteria</taxon>
        <taxon>Bacillati</taxon>
        <taxon>Actinomycetota</taxon>
        <taxon>Actinomycetes</taxon>
        <taxon>Mycobacteriales</taxon>
        <taxon>Mycobacteriaceae</taxon>
        <taxon>Mycobacterium</taxon>
        <taxon>Mycobacterium tuberculosis complex</taxon>
    </lineage>
</organism>
<comment type="function">
    <text evidence="1">Possibly the antitoxin component of a type II toxin-antitoxin (TA) system. Its cognate toxin is VapC48.</text>
</comment>
<feature type="chain" id="PRO_0000408085" description="Putative antitoxin VapB48">
    <location>
        <begin position="1"/>
        <end position="74"/>
    </location>
</feature>
<evidence type="ECO:0000305" key="1">
    <source>
    </source>
</evidence>
<sequence>MRTTIDLDDDILRALKRRQREERKTLGQLASELLAQALAAEPPPNVDIRWSTADLRPRVDLDDKDAVWAILDRG</sequence>